<sequence length="276" mass="30361">MSWHAHLHLDYRQEAARSVARFRHDGPLRILQSLYPEGDAICHNVLVHPPGGLVGGDTLDIDIEAADASHGLITTPGASRFYRSEGELALQRTRIRLAKGARLEWLPLEAICYSGCRAENRLTIEAEPGAEMIGWDVTALGLPNANQPFERGTYLQHIEVPGVWLERGRIDAADHRLLQSPLGFGGHRCIASLFFVSGTPAARARREALLALARTAIDAHGLQESAGATSPHAEIVVLRVLAPVVEPAMQLLRQVWQAWRAELWQLPASSPRIWAT</sequence>
<comment type="function">
    <text evidence="1">Required for maturation of urease via the functional incorporation of the urease nickel metallocenter.</text>
</comment>
<comment type="subunit">
    <text evidence="1">UreD, UreF and UreG form a complex that acts as a GTP-hydrolysis-dependent molecular chaperone, activating the urease apoprotein by helping to assemble the nickel containing metallocenter of UreC. The UreE protein probably delivers the nickel.</text>
</comment>
<comment type="subcellular location">
    <subcellularLocation>
        <location evidence="1">Cytoplasm</location>
    </subcellularLocation>
</comment>
<comment type="similarity">
    <text evidence="1">Belongs to the UreD family.</text>
</comment>
<gene>
    <name evidence="1" type="primary">ureD</name>
    <name type="ordered locus">Vapar_3971</name>
</gene>
<accession>C5CVT2</accession>
<proteinExistence type="inferred from homology"/>
<feature type="chain" id="PRO_1000215125" description="Urease accessory protein UreD">
    <location>
        <begin position="1"/>
        <end position="276"/>
    </location>
</feature>
<name>URED_VARPS</name>
<protein>
    <recommendedName>
        <fullName evidence="1">Urease accessory protein UreD</fullName>
    </recommendedName>
</protein>
<keyword id="KW-0143">Chaperone</keyword>
<keyword id="KW-0963">Cytoplasm</keyword>
<keyword id="KW-0996">Nickel insertion</keyword>
<evidence type="ECO:0000255" key="1">
    <source>
        <dbReference type="HAMAP-Rule" id="MF_01384"/>
    </source>
</evidence>
<reference key="1">
    <citation type="journal article" date="2011" name="J. Bacteriol.">
        <title>Complete genome sequence of the metabolically versatile plant growth-promoting endophyte, Variovorax paradoxus S110.</title>
        <authorList>
            <person name="Han J.I."/>
            <person name="Choi H.K."/>
            <person name="Lee S.W."/>
            <person name="Orwin P.M."/>
            <person name="Kim J."/>
            <person name="Laroe S.L."/>
            <person name="Kim T.G."/>
            <person name="O'Neil J."/>
            <person name="Leadbetter J.R."/>
            <person name="Lee S.Y."/>
            <person name="Hur C.G."/>
            <person name="Spain J.C."/>
            <person name="Ovchinnikova G."/>
            <person name="Goodwin L."/>
            <person name="Han C."/>
        </authorList>
    </citation>
    <scope>NUCLEOTIDE SEQUENCE [LARGE SCALE GENOMIC DNA]</scope>
    <source>
        <strain>S110</strain>
    </source>
</reference>
<dbReference type="EMBL" id="CP001635">
    <property type="protein sequence ID" value="ACS20585.1"/>
    <property type="molecule type" value="Genomic_DNA"/>
</dbReference>
<dbReference type="SMR" id="C5CVT2"/>
<dbReference type="STRING" id="543728.Vapar_3971"/>
<dbReference type="KEGG" id="vap:Vapar_3971"/>
<dbReference type="eggNOG" id="COG0829">
    <property type="taxonomic scope" value="Bacteria"/>
</dbReference>
<dbReference type="HOGENOM" id="CLU_056339_0_0_4"/>
<dbReference type="OrthoDB" id="9798842at2"/>
<dbReference type="GO" id="GO:0005737">
    <property type="term" value="C:cytoplasm"/>
    <property type="evidence" value="ECO:0007669"/>
    <property type="project" value="UniProtKB-SubCell"/>
</dbReference>
<dbReference type="GO" id="GO:0016151">
    <property type="term" value="F:nickel cation binding"/>
    <property type="evidence" value="ECO:0007669"/>
    <property type="project" value="UniProtKB-UniRule"/>
</dbReference>
<dbReference type="HAMAP" id="MF_01384">
    <property type="entry name" value="UreD"/>
    <property type="match status" value="1"/>
</dbReference>
<dbReference type="InterPro" id="IPR002669">
    <property type="entry name" value="UreD"/>
</dbReference>
<dbReference type="PANTHER" id="PTHR33643">
    <property type="entry name" value="UREASE ACCESSORY PROTEIN D"/>
    <property type="match status" value="1"/>
</dbReference>
<dbReference type="PANTHER" id="PTHR33643:SF1">
    <property type="entry name" value="UREASE ACCESSORY PROTEIN D"/>
    <property type="match status" value="1"/>
</dbReference>
<dbReference type="Pfam" id="PF01774">
    <property type="entry name" value="UreD"/>
    <property type="match status" value="1"/>
</dbReference>
<organism>
    <name type="scientific">Variovorax paradoxus (strain S110)</name>
    <dbReference type="NCBI Taxonomy" id="543728"/>
    <lineage>
        <taxon>Bacteria</taxon>
        <taxon>Pseudomonadati</taxon>
        <taxon>Pseudomonadota</taxon>
        <taxon>Betaproteobacteria</taxon>
        <taxon>Burkholderiales</taxon>
        <taxon>Comamonadaceae</taxon>
        <taxon>Variovorax</taxon>
    </lineage>
</organism>